<organism>
    <name type="scientific">Homo sapiens</name>
    <name type="common">Human</name>
    <dbReference type="NCBI Taxonomy" id="9606"/>
    <lineage>
        <taxon>Eukaryota</taxon>
        <taxon>Metazoa</taxon>
        <taxon>Chordata</taxon>
        <taxon>Craniata</taxon>
        <taxon>Vertebrata</taxon>
        <taxon>Euteleostomi</taxon>
        <taxon>Mammalia</taxon>
        <taxon>Eutheria</taxon>
        <taxon>Euarchontoglires</taxon>
        <taxon>Primates</taxon>
        <taxon>Haplorrhini</taxon>
        <taxon>Catarrhini</taxon>
        <taxon>Hominidae</taxon>
        <taxon>Homo</taxon>
    </lineage>
</organism>
<accession>Q6NSI3</accession>
<accession>Q6ZUL5</accession>
<reference key="1">
    <citation type="journal article" date="2004" name="Nat. Genet.">
        <title>Complete sequencing and characterization of 21,243 full-length human cDNAs.</title>
        <authorList>
            <person name="Ota T."/>
            <person name="Suzuki Y."/>
            <person name="Nishikawa T."/>
            <person name="Otsuki T."/>
            <person name="Sugiyama T."/>
            <person name="Irie R."/>
            <person name="Wakamatsu A."/>
            <person name="Hayashi K."/>
            <person name="Sato H."/>
            <person name="Nagai K."/>
            <person name="Kimura K."/>
            <person name="Makita H."/>
            <person name="Sekine M."/>
            <person name="Obayashi M."/>
            <person name="Nishi T."/>
            <person name="Shibahara T."/>
            <person name="Tanaka T."/>
            <person name="Ishii S."/>
            <person name="Yamamoto J."/>
            <person name="Saito K."/>
            <person name="Kawai Y."/>
            <person name="Isono Y."/>
            <person name="Nakamura Y."/>
            <person name="Nagahari K."/>
            <person name="Murakami K."/>
            <person name="Yasuda T."/>
            <person name="Iwayanagi T."/>
            <person name="Wagatsuma M."/>
            <person name="Shiratori A."/>
            <person name="Sudo H."/>
            <person name="Hosoiri T."/>
            <person name="Kaku Y."/>
            <person name="Kodaira H."/>
            <person name="Kondo H."/>
            <person name="Sugawara M."/>
            <person name="Takahashi M."/>
            <person name="Kanda K."/>
            <person name="Yokoi T."/>
            <person name="Furuya T."/>
            <person name="Kikkawa E."/>
            <person name="Omura Y."/>
            <person name="Abe K."/>
            <person name="Kamihara K."/>
            <person name="Katsuta N."/>
            <person name="Sato K."/>
            <person name="Tanikawa M."/>
            <person name="Yamazaki M."/>
            <person name="Ninomiya K."/>
            <person name="Ishibashi T."/>
            <person name="Yamashita H."/>
            <person name="Murakawa K."/>
            <person name="Fujimori K."/>
            <person name="Tanai H."/>
            <person name="Kimata M."/>
            <person name="Watanabe M."/>
            <person name="Hiraoka S."/>
            <person name="Chiba Y."/>
            <person name="Ishida S."/>
            <person name="Ono Y."/>
            <person name="Takiguchi S."/>
            <person name="Watanabe S."/>
            <person name="Yosida M."/>
            <person name="Hotuta T."/>
            <person name="Kusano J."/>
            <person name="Kanehori K."/>
            <person name="Takahashi-Fujii A."/>
            <person name="Hara H."/>
            <person name="Tanase T.-O."/>
            <person name="Nomura Y."/>
            <person name="Togiya S."/>
            <person name="Komai F."/>
            <person name="Hara R."/>
            <person name="Takeuchi K."/>
            <person name="Arita M."/>
            <person name="Imose N."/>
            <person name="Musashino K."/>
            <person name="Yuuki H."/>
            <person name="Oshima A."/>
            <person name="Sasaki N."/>
            <person name="Aotsuka S."/>
            <person name="Yoshikawa Y."/>
            <person name="Matsunawa H."/>
            <person name="Ichihara T."/>
            <person name="Shiohata N."/>
            <person name="Sano S."/>
            <person name="Moriya S."/>
            <person name="Momiyama H."/>
            <person name="Satoh N."/>
            <person name="Takami S."/>
            <person name="Terashima Y."/>
            <person name="Suzuki O."/>
            <person name="Nakagawa S."/>
            <person name="Senoh A."/>
            <person name="Mizoguchi H."/>
            <person name="Goto Y."/>
            <person name="Shimizu F."/>
            <person name="Wakebe H."/>
            <person name="Hishigaki H."/>
            <person name="Watanabe T."/>
            <person name="Sugiyama A."/>
            <person name="Takemoto M."/>
            <person name="Kawakami B."/>
            <person name="Yamazaki M."/>
            <person name="Watanabe K."/>
            <person name="Kumagai A."/>
            <person name="Itakura S."/>
            <person name="Fukuzumi Y."/>
            <person name="Fujimori Y."/>
            <person name="Komiyama M."/>
            <person name="Tashiro H."/>
            <person name="Tanigami A."/>
            <person name="Fujiwara T."/>
            <person name="Ono T."/>
            <person name="Yamada K."/>
            <person name="Fujii Y."/>
            <person name="Ozaki K."/>
            <person name="Hirao M."/>
            <person name="Ohmori Y."/>
            <person name="Kawabata A."/>
            <person name="Hikiji T."/>
            <person name="Kobatake N."/>
            <person name="Inagaki H."/>
            <person name="Ikema Y."/>
            <person name="Okamoto S."/>
            <person name="Okitani R."/>
            <person name="Kawakami T."/>
            <person name="Noguchi S."/>
            <person name="Itoh T."/>
            <person name="Shigeta K."/>
            <person name="Senba T."/>
            <person name="Matsumura K."/>
            <person name="Nakajima Y."/>
            <person name="Mizuno T."/>
            <person name="Morinaga M."/>
            <person name="Sasaki M."/>
            <person name="Togashi T."/>
            <person name="Oyama M."/>
            <person name="Hata H."/>
            <person name="Watanabe M."/>
            <person name="Komatsu T."/>
            <person name="Mizushima-Sugano J."/>
            <person name="Satoh T."/>
            <person name="Shirai Y."/>
            <person name="Takahashi Y."/>
            <person name="Nakagawa K."/>
            <person name="Okumura K."/>
            <person name="Nagase T."/>
            <person name="Nomura N."/>
            <person name="Kikuchi H."/>
            <person name="Masuho Y."/>
            <person name="Yamashita R."/>
            <person name="Nakai K."/>
            <person name="Yada T."/>
            <person name="Nakamura Y."/>
            <person name="Ohara O."/>
            <person name="Isogai T."/>
            <person name="Sugano S."/>
        </authorList>
    </citation>
    <scope>NUCLEOTIDE SEQUENCE [LARGE SCALE MRNA]</scope>
</reference>
<reference key="2">
    <citation type="journal article" date="2004" name="Genome Res.">
        <title>The status, quality, and expansion of the NIH full-length cDNA project: the Mammalian Gene Collection (MGC).</title>
        <authorList>
            <consortium name="The MGC Project Team"/>
        </authorList>
    </citation>
    <scope>NUCLEOTIDE SEQUENCE [LARGE SCALE MRNA]</scope>
    <source>
        <tissue>Testis</tissue>
    </source>
</reference>
<reference key="3">
    <citation type="journal article" date="2013" name="J. Proteome Res.">
        <title>Toward a comprehensive characterization of a human cancer cell phosphoproteome.</title>
        <authorList>
            <person name="Zhou H."/>
            <person name="Di Palma S."/>
            <person name="Preisinger C."/>
            <person name="Peng M."/>
            <person name="Polat A.N."/>
            <person name="Heck A.J."/>
            <person name="Mohammed S."/>
        </authorList>
    </citation>
    <scope>PHOSPHORYLATION [LARGE SCALE ANALYSIS] AT SER-125</scope>
    <scope>IDENTIFICATION BY MASS SPECTROMETRY [LARGE SCALE ANALYSIS]</scope>
    <source>
        <tissue>Cervix carcinoma</tissue>
        <tissue>Erythroleukemia</tissue>
    </source>
</reference>
<feature type="chain" id="PRO_0000261628" description="Protein FAM53A">
    <location>
        <begin position="1"/>
        <end position="398"/>
    </location>
</feature>
<feature type="region of interest" description="Disordered" evidence="4">
    <location>
        <begin position="85"/>
        <end position="253"/>
    </location>
</feature>
<feature type="region of interest" description="Disordered" evidence="4">
    <location>
        <begin position="336"/>
        <end position="398"/>
    </location>
</feature>
<feature type="short sequence motif" description="Nuclear localization signal" evidence="3">
    <location>
        <begin position="268"/>
        <end position="276"/>
    </location>
</feature>
<feature type="compositionally biased region" description="Polar residues" evidence="4">
    <location>
        <begin position="103"/>
        <end position="115"/>
    </location>
</feature>
<feature type="compositionally biased region" description="Basic and acidic residues" evidence="4">
    <location>
        <begin position="123"/>
        <end position="132"/>
    </location>
</feature>
<feature type="compositionally biased region" description="Low complexity" evidence="4">
    <location>
        <begin position="176"/>
        <end position="193"/>
    </location>
</feature>
<feature type="compositionally biased region" description="Low complexity" evidence="4">
    <location>
        <begin position="234"/>
        <end position="250"/>
    </location>
</feature>
<feature type="compositionally biased region" description="Basic and acidic residues" evidence="4">
    <location>
        <begin position="363"/>
        <end position="375"/>
    </location>
</feature>
<feature type="modified residue" description="Phosphoserine" evidence="7">
    <location>
        <position position="125"/>
    </location>
</feature>
<feature type="modified residue" description="Phosphoserine" evidence="1">
    <location>
        <position position="301"/>
    </location>
</feature>
<feature type="modified residue" description="Phosphoserine" evidence="1">
    <location>
        <position position="304"/>
    </location>
</feature>
<feature type="sequence conflict" description="In Ref. 1; BAC86205." evidence="5" ref="1">
    <original>A</original>
    <variation>V</variation>
    <location>
        <position position="95"/>
    </location>
</feature>
<gene>
    <name evidence="6" type="primary">FAM53A</name>
</gene>
<sequence>MVTLITEKLQSQSLDDLTCKAEAGPLQYSAETLNKSGRLFPLELNDQSPWKVFSGGPPVRSQAATGPDFSFLPGLSAAAHTMGLQWQPQSPRPGAGLGAASTVDPSESTGSSTAPPTKRHCRSLSEPEELVRCRSPWRPGSSKVWTPVSKRRCDSGGSATRQGSPGAVLPRSAVWSTGPTSPATPRPSSASGGFVDSSEGSAGSGPLWCSAESCLPSTRRRPSLSQERLAGAGTPLPWASSSPTSTPALGGRRGLLRCRSQPCVLSGKRSRRKRRREEDARWTRPSLDFLKMTQTLKNSKSLCSLNYEDDDEDDTPVKTVLSSPCDSRGLPGITMPGCSQRGLRTSPVHPNLWASRESVTSDGSRRSSGDPRDGDSVGEEGVFPRARWELDLEQIENN</sequence>
<evidence type="ECO:0000250" key="1">
    <source>
        <dbReference type="UniProtKB" id="E9PV82"/>
    </source>
</evidence>
<evidence type="ECO:0000250" key="2">
    <source>
        <dbReference type="UniProtKB" id="Q5ZKN5"/>
    </source>
</evidence>
<evidence type="ECO:0000255" key="3"/>
<evidence type="ECO:0000256" key="4">
    <source>
        <dbReference type="SAM" id="MobiDB-lite"/>
    </source>
</evidence>
<evidence type="ECO:0000305" key="5"/>
<evidence type="ECO:0000312" key="6">
    <source>
        <dbReference type="HGNC" id="HGNC:31860"/>
    </source>
</evidence>
<evidence type="ECO:0007744" key="7">
    <source>
    </source>
</evidence>
<dbReference type="EMBL" id="AK125566">
    <property type="protein sequence ID" value="BAC86205.1"/>
    <property type="molecule type" value="mRNA"/>
</dbReference>
<dbReference type="EMBL" id="BC070112">
    <property type="protein sequence ID" value="AAH70112.1"/>
    <property type="molecule type" value="mRNA"/>
</dbReference>
<dbReference type="CCDS" id="CCDS33939.1"/>
<dbReference type="RefSeq" id="NP_001013644.1">
    <property type="nucleotide sequence ID" value="NM_001013622.3"/>
</dbReference>
<dbReference type="RefSeq" id="NP_001167541.1">
    <property type="nucleotide sequence ID" value="NM_001174070.3"/>
</dbReference>
<dbReference type="RefSeq" id="NP_001284364.1">
    <property type="nucleotide sequence ID" value="NM_001297435.1"/>
</dbReference>
<dbReference type="RefSeq" id="XP_005248005.1">
    <property type="nucleotide sequence ID" value="XM_005247948.3"/>
</dbReference>
<dbReference type="RefSeq" id="XP_011511704.1">
    <property type="nucleotide sequence ID" value="XM_011513402.3"/>
</dbReference>
<dbReference type="RefSeq" id="XP_047305610.1">
    <property type="nucleotide sequence ID" value="XM_047449654.1"/>
</dbReference>
<dbReference type="RefSeq" id="XP_047305611.1">
    <property type="nucleotide sequence ID" value="XM_047449655.1"/>
</dbReference>
<dbReference type="RefSeq" id="XP_047305612.1">
    <property type="nucleotide sequence ID" value="XM_047449656.1"/>
</dbReference>
<dbReference type="RefSeq" id="XP_047305613.1">
    <property type="nucleotide sequence ID" value="XM_047449657.1"/>
</dbReference>
<dbReference type="RefSeq" id="XP_047305614.1">
    <property type="nucleotide sequence ID" value="XM_047449658.1"/>
</dbReference>
<dbReference type="RefSeq" id="XP_047305615.1">
    <property type="nucleotide sequence ID" value="XM_047449659.1"/>
</dbReference>
<dbReference type="RefSeq" id="XP_047305616.1">
    <property type="nucleotide sequence ID" value="XM_047449660.1"/>
</dbReference>
<dbReference type="RefSeq" id="XP_047305617.1">
    <property type="nucleotide sequence ID" value="XM_047449661.1"/>
</dbReference>
<dbReference type="RefSeq" id="XP_047305618.1">
    <property type="nucleotide sequence ID" value="XM_047449662.1"/>
</dbReference>
<dbReference type="RefSeq" id="XP_054204999.1">
    <property type="nucleotide sequence ID" value="XM_054349024.1"/>
</dbReference>
<dbReference type="RefSeq" id="XP_054205000.1">
    <property type="nucleotide sequence ID" value="XM_054349025.1"/>
</dbReference>
<dbReference type="RefSeq" id="XP_054205001.1">
    <property type="nucleotide sequence ID" value="XM_054349026.1"/>
</dbReference>
<dbReference type="RefSeq" id="XP_054205002.1">
    <property type="nucleotide sequence ID" value="XM_054349027.1"/>
</dbReference>
<dbReference type="RefSeq" id="XP_054205003.1">
    <property type="nucleotide sequence ID" value="XM_054349028.1"/>
</dbReference>
<dbReference type="RefSeq" id="XP_054205004.1">
    <property type="nucleotide sequence ID" value="XM_054349029.1"/>
</dbReference>
<dbReference type="RefSeq" id="XP_054205005.1">
    <property type="nucleotide sequence ID" value="XM_054349030.1"/>
</dbReference>
<dbReference type="RefSeq" id="XP_054205006.1">
    <property type="nucleotide sequence ID" value="XM_054349031.1"/>
</dbReference>
<dbReference type="BioGRID" id="127470">
    <property type="interactions" value="4"/>
</dbReference>
<dbReference type="FunCoup" id="Q6NSI3">
    <property type="interactions" value="622"/>
</dbReference>
<dbReference type="STRING" id="9606.ENSP00000310057"/>
<dbReference type="GlyGen" id="Q6NSI3">
    <property type="glycosylation" value="2 sites"/>
</dbReference>
<dbReference type="iPTMnet" id="Q6NSI3"/>
<dbReference type="PhosphoSitePlus" id="Q6NSI3"/>
<dbReference type="BioMuta" id="FAM53A"/>
<dbReference type="DMDM" id="74736712"/>
<dbReference type="jPOST" id="Q6NSI3"/>
<dbReference type="MassIVE" id="Q6NSI3"/>
<dbReference type="PaxDb" id="9606-ENSP00000310057"/>
<dbReference type="PeptideAtlas" id="Q6NSI3"/>
<dbReference type="ProteomicsDB" id="66629"/>
<dbReference type="Antibodypedia" id="50275">
    <property type="antibodies" value="46 antibodies from 10 providers"/>
</dbReference>
<dbReference type="DNASU" id="152877"/>
<dbReference type="Ensembl" id="ENST00000308132.11">
    <property type="protein sequence ID" value="ENSP00000310057.6"/>
    <property type="gene ID" value="ENSG00000174137.14"/>
</dbReference>
<dbReference type="Ensembl" id="ENST00000461064.5">
    <property type="protein sequence ID" value="ENSP00000418243.1"/>
    <property type="gene ID" value="ENSG00000174137.14"/>
</dbReference>
<dbReference type="Ensembl" id="ENST00000472884.6">
    <property type="protein sequence ID" value="ENSP00000426260.1"/>
    <property type="gene ID" value="ENSG00000174137.14"/>
</dbReference>
<dbReference type="GeneID" id="152877"/>
<dbReference type="KEGG" id="hsa:152877"/>
<dbReference type="MANE-Select" id="ENST00000308132.11">
    <property type="protein sequence ID" value="ENSP00000310057.6"/>
    <property type="RefSeq nucleotide sequence ID" value="NM_001174070.3"/>
    <property type="RefSeq protein sequence ID" value="NP_001167541.1"/>
</dbReference>
<dbReference type="UCSC" id="uc021xkk.2">
    <property type="organism name" value="human"/>
</dbReference>
<dbReference type="AGR" id="HGNC:31860"/>
<dbReference type="CTD" id="152877"/>
<dbReference type="DisGeNET" id="152877"/>
<dbReference type="GeneCards" id="FAM53A"/>
<dbReference type="HGNC" id="HGNC:31860">
    <property type="gene designation" value="FAM53A"/>
</dbReference>
<dbReference type="HPA" id="ENSG00000174137">
    <property type="expression patterns" value="Tissue enhanced (testis)"/>
</dbReference>
<dbReference type="neXtProt" id="NX_Q6NSI3"/>
<dbReference type="OpenTargets" id="ENSG00000174137"/>
<dbReference type="PharmGKB" id="PA142671887"/>
<dbReference type="VEuPathDB" id="HostDB:ENSG00000174137"/>
<dbReference type="eggNOG" id="ENOG502RUYA">
    <property type="taxonomic scope" value="Eukaryota"/>
</dbReference>
<dbReference type="GeneTree" id="ENSGT00530000063371"/>
<dbReference type="HOGENOM" id="CLU_054215_0_0_1"/>
<dbReference type="InParanoid" id="Q6NSI3"/>
<dbReference type="OMA" id="PWASWEP"/>
<dbReference type="OrthoDB" id="10026856at2759"/>
<dbReference type="PAN-GO" id="Q6NSI3">
    <property type="GO annotations" value="2 GO annotations based on evolutionary models"/>
</dbReference>
<dbReference type="PhylomeDB" id="Q6NSI3"/>
<dbReference type="TreeFam" id="TF332095"/>
<dbReference type="PathwayCommons" id="Q6NSI3"/>
<dbReference type="SignaLink" id="Q6NSI3"/>
<dbReference type="BioGRID-ORCS" id="152877">
    <property type="hits" value="12 hits in 1148 CRISPR screens"/>
</dbReference>
<dbReference type="CD-CODE" id="1A18FFC4">
    <property type="entry name" value="Paraspeckle"/>
</dbReference>
<dbReference type="ChiTaRS" id="FAM53A">
    <property type="organism name" value="human"/>
</dbReference>
<dbReference type="GenomeRNAi" id="152877"/>
<dbReference type="Pharos" id="Q6NSI3">
    <property type="development level" value="Tdark"/>
</dbReference>
<dbReference type="PRO" id="PR:Q6NSI3"/>
<dbReference type="Proteomes" id="UP000005640">
    <property type="component" value="Chromosome 4"/>
</dbReference>
<dbReference type="RNAct" id="Q6NSI3">
    <property type="molecule type" value="protein"/>
</dbReference>
<dbReference type="Bgee" id="ENSG00000174137">
    <property type="expression patterns" value="Expressed in oocyte and 135 other cell types or tissues"/>
</dbReference>
<dbReference type="ExpressionAtlas" id="Q6NSI3">
    <property type="expression patterns" value="baseline and differential"/>
</dbReference>
<dbReference type="GO" id="GO:0005634">
    <property type="term" value="C:nucleus"/>
    <property type="evidence" value="ECO:0000318"/>
    <property type="project" value="GO_Central"/>
</dbReference>
<dbReference type="GO" id="GO:0006606">
    <property type="term" value="P:protein import into nucleus"/>
    <property type="evidence" value="ECO:0000318"/>
    <property type="project" value="GO_Central"/>
</dbReference>
<dbReference type="InterPro" id="IPR029356">
    <property type="entry name" value="FAM53"/>
</dbReference>
<dbReference type="PANTHER" id="PTHR28567:SF2">
    <property type="entry name" value="PROTEIN FAM53A"/>
    <property type="match status" value="1"/>
</dbReference>
<dbReference type="PANTHER" id="PTHR28567">
    <property type="entry name" value="PROTEIN FAM53A-LIKE ISOFORM X1"/>
    <property type="match status" value="1"/>
</dbReference>
<dbReference type="Pfam" id="PF15242">
    <property type="entry name" value="FAM53"/>
    <property type="match status" value="1"/>
</dbReference>
<proteinExistence type="evidence at protein level"/>
<protein>
    <recommendedName>
        <fullName evidence="5">Protein FAM53A</fullName>
    </recommendedName>
    <alternativeName>
        <fullName evidence="2">Dorsal neural-tube nuclear protein</fullName>
    </alternativeName>
</protein>
<comment type="function">
    <text evidence="2">May play an important role in neural development; the dorsomedial roof of the third ventricle.</text>
</comment>
<comment type="subcellular location">
    <subcellularLocation>
        <location evidence="2">Nucleus</location>
    </subcellularLocation>
    <text evidence="2">Subnuclear distribution.</text>
</comment>
<comment type="similarity">
    <text evidence="5">Belongs to the FAM53 family.</text>
</comment>
<name>FA53A_HUMAN</name>
<keyword id="KW-0539">Nucleus</keyword>
<keyword id="KW-0597">Phosphoprotein</keyword>
<keyword id="KW-1267">Proteomics identification</keyword>
<keyword id="KW-1185">Reference proteome</keyword>